<sequence>MPHLLVTFRDVAIDFSQEEWECLDPAQRDLYRDVMLENYSNLISLDLESSCVTKKLSPEKEIYEMESLQWENMGKRINHHLQYNGLGDNMECKGNLEGQEASQEGLYMCVKITCEEKATESHSTSSTFHRIIPTKEKLYKCKECRQGFSYLSCLIQHEENHNIEKCSEVKKHRNTFSKKPSYIQHQRIQTGEKPYECMECGKAFGRTSDLIQHQKIHTNEKPYQCNACGKAFIRGSQLTEHQRVHTGEKPYECKKCGKAFSYCSQYTLHQRIHSGEKPYECKDCGKAFILGSQLTYHQRIHSGEKPYECKECGKAFILGSHLTYHQRVHTGEKPYICKECGKAFLCASQLNEHQRIHTGEKPYECKECGKTFFRGSQLTYHLRVHSGERPYKCKECGKAFISNSNLIQHQRIHTGEKPYKCKECGKAFICGKQLSEHQRIHTGEKPFECKECGKAFIRVAYLTQHEKIHGEKHYECKECGKTFVRATQLTYHQRIHTGEKPYKCKECDKAFIYGSQLSEHQRIHRGEKPYECKQCGKAFIRGSHLTEHLRTHTGEKPYECKECGRAFSRGSELTLHQRIHTGEKPYTCVQCGKDFRCPSQLTQHTRLHN</sequence>
<protein>
    <recommendedName>
        <fullName>Zinc finger protein 571</fullName>
    </recommendedName>
</protein>
<dbReference type="EMBL" id="AF161544">
    <property type="protein sequence ID" value="AAF29031.2"/>
    <property type="molecule type" value="mRNA"/>
</dbReference>
<dbReference type="EMBL" id="BX537401">
    <property type="protein sequence ID" value="CAD97643.1"/>
    <property type="molecule type" value="mRNA"/>
</dbReference>
<dbReference type="EMBL" id="BC040591">
    <property type="protein sequence ID" value="AAH40591.1"/>
    <property type="molecule type" value="mRNA"/>
</dbReference>
<dbReference type="EMBL" id="BC113870">
    <property type="protein sequence ID" value="AAI13871.1"/>
    <property type="molecule type" value="mRNA"/>
</dbReference>
<dbReference type="CCDS" id="CCDS12505.1"/>
<dbReference type="RefSeq" id="NP_001277243.1">
    <property type="nucleotide sequence ID" value="NM_001290314.2"/>
</dbReference>
<dbReference type="RefSeq" id="NP_001308201.1">
    <property type="nucleotide sequence ID" value="NM_001321272.2"/>
</dbReference>
<dbReference type="RefSeq" id="NP_057620.3">
    <property type="nucleotide sequence ID" value="NM_016536.4"/>
</dbReference>
<dbReference type="SMR" id="Q7Z3V5"/>
<dbReference type="BioGRID" id="119428">
    <property type="interactions" value="5"/>
</dbReference>
<dbReference type="FunCoup" id="Q7Z3V5">
    <property type="interactions" value="579"/>
</dbReference>
<dbReference type="IntAct" id="Q7Z3V5">
    <property type="interactions" value="5"/>
</dbReference>
<dbReference type="STRING" id="9606.ENSP00000333660"/>
<dbReference type="iPTMnet" id="Q7Z3V5"/>
<dbReference type="PhosphoSitePlus" id="Q7Z3V5"/>
<dbReference type="BioMuta" id="ZNF571"/>
<dbReference type="DMDM" id="134047978"/>
<dbReference type="jPOST" id="Q7Z3V5"/>
<dbReference type="MassIVE" id="Q7Z3V5"/>
<dbReference type="PaxDb" id="9606-ENSP00000333660"/>
<dbReference type="PeptideAtlas" id="Q7Z3V5"/>
<dbReference type="ProteomicsDB" id="69092"/>
<dbReference type="Antibodypedia" id="29923">
    <property type="antibodies" value="86 antibodies from 17 providers"/>
</dbReference>
<dbReference type="DNASU" id="51276"/>
<dbReference type="Ensembl" id="ENST00000358744.3">
    <property type="protein sequence ID" value="ENSP00000351594.3"/>
    <property type="gene ID" value="ENSG00000180479.15"/>
</dbReference>
<dbReference type="Ensembl" id="ENST00000451802.7">
    <property type="protein sequence ID" value="ENSP00000392638.1"/>
    <property type="gene ID" value="ENSG00000180479.15"/>
</dbReference>
<dbReference type="Ensembl" id="ENST00000593133.5">
    <property type="protein sequence ID" value="ENSP00000467572.1"/>
    <property type="gene ID" value="ENSG00000180479.15"/>
</dbReference>
<dbReference type="GeneID" id="51276"/>
<dbReference type="KEGG" id="hsa:51276"/>
<dbReference type="MANE-Select" id="ENST00000451802.7">
    <property type="protein sequence ID" value="ENSP00000392638.1"/>
    <property type="RefSeq nucleotide sequence ID" value="NM_016536.5"/>
    <property type="RefSeq protein sequence ID" value="NP_057620.3"/>
</dbReference>
<dbReference type="UCSC" id="uc002ogt.4">
    <property type="organism name" value="human"/>
</dbReference>
<dbReference type="AGR" id="HGNC:25000"/>
<dbReference type="CTD" id="51276"/>
<dbReference type="DisGeNET" id="51276"/>
<dbReference type="GeneCards" id="ZNF571"/>
<dbReference type="HGNC" id="HGNC:25000">
    <property type="gene designation" value="ZNF571"/>
</dbReference>
<dbReference type="HPA" id="ENSG00000180479">
    <property type="expression patterns" value="Tissue enhanced (thyroid)"/>
</dbReference>
<dbReference type="neXtProt" id="NX_Q7Z3V5"/>
<dbReference type="OpenTargets" id="ENSG00000180479"/>
<dbReference type="PharmGKB" id="PA134892585"/>
<dbReference type="VEuPathDB" id="HostDB:ENSG00000180479"/>
<dbReference type="eggNOG" id="KOG1721">
    <property type="taxonomic scope" value="Eukaryota"/>
</dbReference>
<dbReference type="GeneTree" id="ENSGT00940000163517"/>
<dbReference type="HOGENOM" id="CLU_002678_44_5_1"/>
<dbReference type="InParanoid" id="Q7Z3V5"/>
<dbReference type="OMA" id="KRPERHF"/>
<dbReference type="OrthoDB" id="9411774at2759"/>
<dbReference type="PAN-GO" id="Q7Z3V5">
    <property type="GO annotations" value="4 GO annotations based on evolutionary models"/>
</dbReference>
<dbReference type="PhylomeDB" id="Q7Z3V5"/>
<dbReference type="TreeFam" id="TF341817"/>
<dbReference type="PathwayCommons" id="Q7Z3V5"/>
<dbReference type="Reactome" id="R-HSA-212436">
    <property type="pathway name" value="Generic Transcription Pathway"/>
</dbReference>
<dbReference type="SignaLink" id="Q7Z3V5"/>
<dbReference type="BioGRID-ORCS" id="51276">
    <property type="hits" value="12 hits in 1162 CRISPR screens"/>
</dbReference>
<dbReference type="ChiTaRS" id="ZNF571">
    <property type="organism name" value="human"/>
</dbReference>
<dbReference type="GeneWiki" id="ZNF571"/>
<dbReference type="GenomeRNAi" id="51276"/>
<dbReference type="Pharos" id="Q7Z3V5">
    <property type="development level" value="Tdark"/>
</dbReference>
<dbReference type="PRO" id="PR:Q7Z3V5"/>
<dbReference type="Proteomes" id="UP000005640">
    <property type="component" value="Chromosome 19"/>
</dbReference>
<dbReference type="RNAct" id="Q7Z3V5">
    <property type="molecule type" value="protein"/>
</dbReference>
<dbReference type="Bgee" id="ENSG00000180479">
    <property type="expression patterns" value="Expressed in secondary oocyte and 125 other cell types or tissues"/>
</dbReference>
<dbReference type="ExpressionAtlas" id="Q7Z3V5">
    <property type="expression patterns" value="baseline and differential"/>
</dbReference>
<dbReference type="GO" id="GO:0005634">
    <property type="term" value="C:nucleus"/>
    <property type="evidence" value="ECO:0000314"/>
    <property type="project" value="LIFEdb"/>
</dbReference>
<dbReference type="GO" id="GO:0000981">
    <property type="term" value="F:DNA-binding transcription factor activity, RNA polymerase II-specific"/>
    <property type="evidence" value="ECO:0000318"/>
    <property type="project" value="GO_Central"/>
</dbReference>
<dbReference type="GO" id="GO:0000978">
    <property type="term" value="F:RNA polymerase II cis-regulatory region sequence-specific DNA binding"/>
    <property type="evidence" value="ECO:0000318"/>
    <property type="project" value="GO_Central"/>
</dbReference>
<dbReference type="GO" id="GO:0008270">
    <property type="term" value="F:zinc ion binding"/>
    <property type="evidence" value="ECO:0007669"/>
    <property type="project" value="UniProtKB-KW"/>
</dbReference>
<dbReference type="GO" id="GO:0006357">
    <property type="term" value="P:regulation of transcription by RNA polymerase II"/>
    <property type="evidence" value="ECO:0000318"/>
    <property type="project" value="GO_Central"/>
</dbReference>
<dbReference type="CDD" id="cd07765">
    <property type="entry name" value="KRAB_A-box"/>
    <property type="match status" value="1"/>
</dbReference>
<dbReference type="FunFam" id="3.30.160.60:FF:000136">
    <property type="entry name" value="GLI family zinc finger 4"/>
    <property type="match status" value="1"/>
</dbReference>
<dbReference type="FunFam" id="3.30.160.60:FF:000020">
    <property type="entry name" value="Zinc finger protein 14 homolog"/>
    <property type="match status" value="1"/>
</dbReference>
<dbReference type="FunFam" id="3.30.160.60:FF:000690">
    <property type="entry name" value="Zinc finger protein 354C"/>
    <property type="match status" value="1"/>
</dbReference>
<dbReference type="FunFam" id="3.30.160.60:FF:000338">
    <property type="entry name" value="zinc finger protein 383"/>
    <property type="match status" value="1"/>
</dbReference>
<dbReference type="FunFam" id="3.30.160.60:FF:002254">
    <property type="entry name" value="Zinc finger protein 540"/>
    <property type="match status" value="3"/>
</dbReference>
<dbReference type="FunFam" id="3.30.160.60:FF:000737">
    <property type="entry name" value="Zinc finger protein 565"/>
    <property type="match status" value="1"/>
</dbReference>
<dbReference type="FunFam" id="3.30.160.60:FF:001149">
    <property type="entry name" value="Zinc finger protein 571"/>
    <property type="match status" value="3"/>
</dbReference>
<dbReference type="FunFam" id="3.30.160.60:FF:001380">
    <property type="entry name" value="Zinc finger protein 571"/>
    <property type="match status" value="2"/>
</dbReference>
<dbReference type="FunFam" id="3.30.160.60:FF:001432">
    <property type="entry name" value="Zinc finger protein 571"/>
    <property type="match status" value="1"/>
</dbReference>
<dbReference type="FunFam" id="3.30.160.60:FF:001944">
    <property type="entry name" value="Zinc finger protein 571"/>
    <property type="match status" value="1"/>
</dbReference>
<dbReference type="Gene3D" id="6.10.140.140">
    <property type="match status" value="1"/>
</dbReference>
<dbReference type="Gene3D" id="3.30.160.60">
    <property type="entry name" value="Classic Zinc Finger"/>
    <property type="match status" value="17"/>
</dbReference>
<dbReference type="InterPro" id="IPR001909">
    <property type="entry name" value="KRAB"/>
</dbReference>
<dbReference type="InterPro" id="IPR036051">
    <property type="entry name" value="KRAB_dom_sf"/>
</dbReference>
<dbReference type="InterPro" id="IPR036236">
    <property type="entry name" value="Znf_C2H2_sf"/>
</dbReference>
<dbReference type="InterPro" id="IPR013087">
    <property type="entry name" value="Znf_C2H2_type"/>
</dbReference>
<dbReference type="PANTHER" id="PTHR24394">
    <property type="entry name" value="ZINC FINGER PROTEIN"/>
    <property type="match status" value="1"/>
</dbReference>
<dbReference type="PANTHER" id="PTHR24394:SF48">
    <property type="entry name" value="ZINC FINGER PROTEIN 771"/>
    <property type="match status" value="1"/>
</dbReference>
<dbReference type="Pfam" id="PF01352">
    <property type="entry name" value="KRAB"/>
    <property type="match status" value="1"/>
</dbReference>
<dbReference type="Pfam" id="PF00096">
    <property type="entry name" value="zf-C2H2"/>
    <property type="match status" value="13"/>
</dbReference>
<dbReference type="SMART" id="SM00349">
    <property type="entry name" value="KRAB"/>
    <property type="match status" value="1"/>
</dbReference>
<dbReference type="SMART" id="SM00355">
    <property type="entry name" value="ZnF_C2H2"/>
    <property type="match status" value="16"/>
</dbReference>
<dbReference type="SUPFAM" id="SSF57667">
    <property type="entry name" value="beta-beta-alpha zinc fingers"/>
    <property type="match status" value="9"/>
</dbReference>
<dbReference type="SUPFAM" id="SSF109640">
    <property type="entry name" value="KRAB domain (Kruppel-associated box)"/>
    <property type="match status" value="1"/>
</dbReference>
<dbReference type="PROSITE" id="PS50805">
    <property type="entry name" value="KRAB"/>
    <property type="match status" value="1"/>
</dbReference>
<dbReference type="PROSITE" id="PS00028">
    <property type="entry name" value="ZINC_FINGER_C2H2_1"/>
    <property type="match status" value="16"/>
</dbReference>
<dbReference type="PROSITE" id="PS50157">
    <property type="entry name" value="ZINC_FINGER_C2H2_2"/>
    <property type="match status" value="17"/>
</dbReference>
<accession>Q7Z3V5</accession>
<accession>Q2HIY0</accession>
<accession>Q3ZCU3</accession>
<accession>Q9NZX7</accession>
<comment type="function">
    <text>May be involved in transcriptional regulation.</text>
</comment>
<comment type="subcellular location">
    <subcellularLocation>
        <location evidence="6">Nucleus</location>
    </subcellularLocation>
</comment>
<comment type="similarity">
    <text evidence="6">Belongs to the krueppel C2H2-type zinc-finger protein family.</text>
</comment>
<proteinExistence type="evidence at protein level"/>
<evidence type="ECO:0000255" key="1">
    <source>
        <dbReference type="PROSITE-ProRule" id="PRU00042"/>
    </source>
</evidence>
<evidence type="ECO:0000255" key="2">
    <source>
        <dbReference type="PROSITE-ProRule" id="PRU00119"/>
    </source>
</evidence>
<evidence type="ECO:0000269" key="3">
    <source>
    </source>
</evidence>
<evidence type="ECO:0000269" key="4">
    <source>
    </source>
</evidence>
<evidence type="ECO:0000269" key="5">
    <source>
    </source>
</evidence>
<evidence type="ECO:0000305" key="6"/>
<gene>
    <name type="primary">ZNF571</name>
    <name type="ORF">HSPC059</name>
</gene>
<keyword id="KW-0238">DNA-binding</keyword>
<keyword id="KW-0479">Metal-binding</keyword>
<keyword id="KW-0539">Nucleus</keyword>
<keyword id="KW-1267">Proteomics identification</keyword>
<keyword id="KW-1185">Reference proteome</keyword>
<keyword id="KW-0677">Repeat</keyword>
<keyword id="KW-0804">Transcription</keyword>
<keyword id="KW-0805">Transcription regulation</keyword>
<keyword id="KW-0862">Zinc</keyword>
<keyword id="KW-0863">Zinc-finger</keyword>
<organism>
    <name type="scientific">Homo sapiens</name>
    <name type="common">Human</name>
    <dbReference type="NCBI Taxonomy" id="9606"/>
    <lineage>
        <taxon>Eukaryota</taxon>
        <taxon>Metazoa</taxon>
        <taxon>Chordata</taxon>
        <taxon>Craniata</taxon>
        <taxon>Vertebrata</taxon>
        <taxon>Euteleostomi</taxon>
        <taxon>Mammalia</taxon>
        <taxon>Eutheria</taxon>
        <taxon>Euarchontoglires</taxon>
        <taxon>Primates</taxon>
        <taxon>Haplorrhini</taxon>
        <taxon>Catarrhini</taxon>
        <taxon>Hominidae</taxon>
        <taxon>Homo</taxon>
    </lineage>
</organism>
<reference key="1">
    <citation type="journal article" date="2000" name="Genome Res.">
        <title>Cloning and functional analysis of cDNAs with open reading frames for 300 previously undefined genes expressed in CD34+ hematopoietic stem/progenitor cells.</title>
        <authorList>
            <person name="Zhang Q.-H."/>
            <person name="Ye M."/>
            <person name="Wu X.-Y."/>
            <person name="Ren S.-X."/>
            <person name="Zhao M."/>
            <person name="Zhao C.-J."/>
            <person name="Fu G."/>
            <person name="Shen Y."/>
            <person name="Fan H.-Y."/>
            <person name="Lu G."/>
            <person name="Zhong M."/>
            <person name="Xu X.-R."/>
            <person name="Han Z.-G."/>
            <person name="Zhang J.-W."/>
            <person name="Tao J."/>
            <person name="Huang Q.-H."/>
            <person name="Zhou J."/>
            <person name="Hu G.-X."/>
            <person name="Gu J."/>
            <person name="Chen S.-J."/>
            <person name="Chen Z."/>
        </authorList>
    </citation>
    <scope>NUCLEOTIDE SEQUENCE [LARGE SCALE MRNA]</scope>
    <scope>VARIANTS ASP-252 AND HIS-573</scope>
    <source>
        <tissue>Umbilical cord blood</tissue>
    </source>
</reference>
<reference key="2">
    <citation type="journal article" date="2007" name="BMC Genomics">
        <title>The full-ORF clone resource of the German cDNA consortium.</title>
        <authorList>
            <person name="Bechtel S."/>
            <person name="Rosenfelder H."/>
            <person name="Duda A."/>
            <person name="Schmidt C.P."/>
            <person name="Ernst U."/>
            <person name="Wellenreuther R."/>
            <person name="Mehrle A."/>
            <person name="Schuster C."/>
            <person name="Bahr A."/>
            <person name="Bloecker H."/>
            <person name="Heubner D."/>
            <person name="Hoerlein A."/>
            <person name="Michel G."/>
            <person name="Wedler H."/>
            <person name="Koehrer K."/>
            <person name="Ottenwaelder B."/>
            <person name="Poustka A."/>
            <person name="Wiemann S."/>
            <person name="Schupp I."/>
        </authorList>
    </citation>
    <scope>NUCLEOTIDE SEQUENCE [LARGE SCALE MRNA]</scope>
    <scope>VARIANT HIS-189</scope>
    <source>
        <tissue>Retina</tissue>
    </source>
</reference>
<reference key="3">
    <citation type="journal article" date="2004" name="Genome Res.">
        <title>The status, quality, and expansion of the NIH full-length cDNA project: the Mammalian Gene Collection (MGC).</title>
        <authorList>
            <consortium name="The MGC Project Team"/>
        </authorList>
    </citation>
    <scope>NUCLEOTIDE SEQUENCE [LARGE SCALE MRNA]</scope>
    <scope>VARIANT HIS-189</scope>
    <source>
        <tissue>Testis</tissue>
    </source>
</reference>
<name>ZN571_HUMAN</name>
<feature type="chain" id="PRO_0000047662" description="Zinc finger protein 571">
    <location>
        <begin position="1"/>
        <end position="609"/>
    </location>
</feature>
<feature type="domain" description="KRAB" evidence="2">
    <location>
        <begin position="6"/>
        <end position="84"/>
    </location>
</feature>
<feature type="zinc finger region" description="C2H2-type 1" evidence="1">
    <location>
        <begin position="139"/>
        <end position="161"/>
    </location>
</feature>
<feature type="zinc finger region" description="C2H2-type 2; atypical" evidence="1">
    <location>
        <begin position="164"/>
        <end position="189"/>
    </location>
</feature>
<feature type="zinc finger region" description="C2H2-type 3" evidence="1">
    <location>
        <begin position="195"/>
        <end position="217"/>
    </location>
</feature>
<feature type="zinc finger region" description="C2H2-type 4" evidence="1">
    <location>
        <begin position="223"/>
        <end position="245"/>
    </location>
</feature>
<feature type="zinc finger region" description="C2H2-type 5" evidence="1">
    <location>
        <begin position="251"/>
        <end position="273"/>
    </location>
</feature>
<feature type="zinc finger region" description="C2H2-type 6" evidence="1">
    <location>
        <begin position="279"/>
        <end position="301"/>
    </location>
</feature>
<feature type="zinc finger region" description="C2H2-type 7" evidence="1">
    <location>
        <begin position="307"/>
        <end position="329"/>
    </location>
</feature>
<feature type="zinc finger region" description="C2H2-type 8" evidence="1">
    <location>
        <begin position="335"/>
        <end position="357"/>
    </location>
</feature>
<feature type="zinc finger region" description="C2H2-type 9" evidence="1">
    <location>
        <begin position="363"/>
        <end position="385"/>
    </location>
</feature>
<feature type="zinc finger region" description="C2H2-type 10" evidence="1">
    <location>
        <begin position="391"/>
        <end position="413"/>
    </location>
</feature>
<feature type="zinc finger region" description="C2H2-type 11" evidence="1">
    <location>
        <begin position="419"/>
        <end position="441"/>
    </location>
</feature>
<feature type="zinc finger region" description="C2H2-type 12" evidence="1">
    <location>
        <begin position="447"/>
        <end position="469"/>
    </location>
</feature>
<feature type="zinc finger region" description="C2H2-type 13" evidence="1">
    <location>
        <begin position="474"/>
        <end position="496"/>
    </location>
</feature>
<feature type="zinc finger region" description="C2H2-type 14" evidence="1">
    <location>
        <begin position="502"/>
        <end position="524"/>
    </location>
</feature>
<feature type="zinc finger region" description="C2H2-type 15" evidence="1">
    <location>
        <begin position="530"/>
        <end position="552"/>
    </location>
</feature>
<feature type="zinc finger region" description="C2H2-type 16" evidence="1">
    <location>
        <begin position="558"/>
        <end position="580"/>
    </location>
</feature>
<feature type="zinc finger region" description="C2H2-type 17" evidence="1">
    <location>
        <begin position="586"/>
        <end position="608"/>
    </location>
</feature>
<feature type="sequence variant" id="VAR_052869" description="In dbSNP:rs16973893.">
    <original>K</original>
    <variation>M</variation>
    <location>
        <position position="170"/>
    </location>
</feature>
<feature type="sequence variant" id="VAR_023953" description="In dbSNP:rs8111790." evidence="4 5">
    <original>Q</original>
    <variation>H</variation>
    <location>
        <position position="189"/>
    </location>
</feature>
<feature type="sequence variant" id="VAR_023954" description="In dbSNP:rs28512414." evidence="3">
    <original>E</original>
    <variation>D</variation>
    <location>
        <position position="252"/>
    </location>
</feature>
<feature type="sequence variant" id="VAR_023955" description="In dbSNP:rs4802029." evidence="3">
    <original>L</original>
    <variation>H</variation>
    <location>
        <position position="573"/>
    </location>
</feature>
<feature type="sequence variant" id="VAR_031093" description="In dbSNP:rs16973890.">
    <original>K</original>
    <variation>E</variation>
    <location>
        <position position="593"/>
    </location>
</feature>
<feature type="sequence conflict" description="In Ref. 2; CAD97643." evidence="6" ref="2">
    <original>I</original>
    <variation>V</variation>
    <location>
        <position position="62"/>
    </location>
</feature>
<feature type="sequence conflict" description="In Ref. 3; AAH40591." evidence="6" ref="3">
    <original>S</original>
    <variation>N</variation>
    <location>
        <position position="102"/>
    </location>
</feature>